<dbReference type="EC" id="4.1.3.1" evidence="3"/>
<dbReference type="EMBL" id="AB004651">
    <property type="protein sequence ID" value="BAA23678.1"/>
    <property type="molecule type" value="Genomic_DNA"/>
</dbReference>
<dbReference type="SMR" id="O50078"/>
<dbReference type="UniPathway" id="UPA00703">
    <property type="reaction ID" value="UER00719"/>
</dbReference>
<dbReference type="UniPathway" id="UPA00927"/>
<dbReference type="GO" id="GO:0004451">
    <property type="term" value="F:isocitrate lyase activity"/>
    <property type="evidence" value="ECO:0000314"/>
    <property type="project" value="UniProtKB"/>
</dbReference>
<dbReference type="GO" id="GO:0000287">
    <property type="term" value="F:magnesium ion binding"/>
    <property type="evidence" value="ECO:0000314"/>
    <property type="project" value="UniProtKB"/>
</dbReference>
<dbReference type="GO" id="GO:0046914">
    <property type="term" value="F:transition metal ion binding"/>
    <property type="evidence" value="ECO:0000314"/>
    <property type="project" value="UniProtKB"/>
</dbReference>
<dbReference type="GO" id="GO:0006097">
    <property type="term" value="P:glyoxylate cycle"/>
    <property type="evidence" value="ECO:0000314"/>
    <property type="project" value="UniProtKB"/>
</dbReference>
<dbReference type="GO" id="GO:0006099">
    <property type="term" value="P:tricarboxylic acid cycle"/>
    <property type="evidence" value="ECO:0000314"/>
    <property type="project" value="UniProtKB"/>
</dbReference>
<dbReference type="CDD" id="cd00377">
    <property type="entry name" value="ICL_PEPM"/>
    <property type="match status" value="1"/>
</dbReference>
<dbReference type="Gene3D" id="3.20.20.60">
    <property type="entry name" value="Phosphoenolpyruvate-binding domains"/>
    <property type="match status" value="1"/>
</dbReference>
<dbReference type="InterPro" id="IPR039556">
    <property type="entry name" value="ICL/PEPM"/>
</dbReference>
<dbReference type="InterPro" id="IPR006254">
    <property type="entry name" value="Isocitrate_lyase"/>
</dbReference>
<dbReference type="InterPro" id="IPR015813">
    <property type="entry name" value="Pyrv/PenolPyrv_kinase-like_dom"/>
</dbReference>
<dbReference type="InterPro" id="IPR040442">
    <property type="entry name" value="Pyrv_kinase-like_dom_sf"/>
</dbReference>
<dbReference type="NCBIfam" id="NF005074">
    <property type="entry name" value="PRK06498.1"/>
    <property type="match status" value="1"/>
</dbReference>
<dbReference type="PANTHER" id="PTHR21631:SF3">
    <property type="entry name" value="BIFUNCTIONAL GLYOXYLATE CYCLE PROTEIN"/>
    <property type="match status" value="1"/>
</dbReference>
<dbReference type="PANTHER" id="PTHR21631">
    <property type="entry name" value="ISOCITRATE LYASE/MALATE SYNTHASE"/>
    <property type="match status" value="1"/>
</dbReference>
<dbReference type="Pfam" id="PF00463">
    <property type="entry name" value="ICL"/>
    <property type="match status" value="3"/>
</dbReference>
<dbReference type="PIRSF" id="PIRSF001362">
    <property type="entry name" value="Isocit_lyase"/>
    <property type="match status" value="1"/>
</dbReference>
<dbReference type="SUPFAM" id="SSF51621">
    <property type="entry name" value="Phosphoenolpyruvate/pyruvate domain"/>
    <property type="match status" value="1"/>
</dbReference>
<protein>
    <recommendedName>
        <fullName evidence="4">Isocitrate lyase</fullName>
        <shortName evidence="4">ICL</shortName>
        <ecNumber evidence="3">4.1.3.1</ecNumber>
    </recommendedName>
    <alternativeName>
        <fullName evidence="4">Isocitrase</fullName>
    </alternativeName>
    <alternativeName>
        <fullName evidence="4">Isocitratase</fullName>
    </alternativeName>
</protein>
<keyword id="KW-0903">Direct protein sequencing</keyword>
<keyword id="KW-0329">Glyoxylate bypass</keyword>
<keyword id="KW-0456">Lyase</keyword>
<keyword id="KW-0460">Magnesium</keyword>
<keyword id="KW-0464">Manganese</keyword>
<keyword id="KW-0479">Metal-binding</keyword>
<keyword id="KW-0816">Tricarboxylic acid cycle</keyword>
<proteinExistence type="evidence at protein level"/>
<organism>
    <name type="scientific">Hyphomicrobium methylovorum</name>
    <dbReference type="NCBI Taxonomy" id="84"/>
    <lineage>
        <taxon>Bacteria</taxon>
        <taxon>Pseudomonadati</taxon>
        <taxon>Pseudomonadota</taxon>
        <taxon>Alphaproteobacteria</taxon>
        <taxon>Hyphomicrobiales</taxon>
        <taxon>Hyphomicrobiaceae</taxon>
        <taxon>Hyphomicrobium</taxon>
    </lineage>
</organism>
<gene>
    <name evidence="1" type="primary">aceA</name>
    <name evidence="4" type="synonym">icl</name>
</gene>
<sequence length="540" mass="59898">MAHKKTYSQLRSELLARYPVGLTKGGVSIDDIVQLRLQSPYESHLDVARAMASVMRADMAAYDRDTGKFTQSLGCWSGFHAQQMIKAVKRLRGTTKGAYVYLSGWMVAGLRNRWGHLPDQSMHEKTSVVDLIEEIYVSLRQADEVALNDLFNELKDARAKGATNKACEEIISRIDGFESHVVPIIADIDAGFGNEHATYLLAKEMIKAGACCLQIENQVSDAKQCGHQDGKVTVPREDFIEKLRACRLAFEELGVDDGVIVARTDSLGASLTQKIPVSQQAGDFASSYIKWLKTEPITDANPLSEGELAIWQSGNFARPIRMPNGLFSFREGTGRARVIEDCIASLKDGDADLIWIETDTPNVDEIASMVAEIRKQVPDAKLVYNNSPSFNWTLNLRKQVRAQWISEGKIAEADYPDGTALMSAQYDTSELGREADDRLRQFQVDISARAGVFHNLITLPTFHLTAKSTDELSHGYFGEDRMLAYVATVQREEIRRSISAVRHQHEVGSDLGDTFKEMVSGDRALKAGGAHNTMNQFAAE</sequence>
<evidence type="ECO:0000250" key="1">
    <source>
        <dbReference type="UniProtKB" id="P0A9G6"/>
    </source>
</evidence>
<evidence type="ECO:0000250" key="2">
    <source>
        <dbReference type="UniProtKB" id="P9WKK7"/>
    </source>
</evidence>
<evidence type="ECO:0000269" key="3">
    <source>
    </source>
</evidence>
<evidence type="ECO:0000303" key="4">
    <source>
    </source>
</evidence>
<evidence type="ECO:0000305" key="5"/>
<evidence type="ECO:0000305" key="6">
    <source>
    </source>
</evidence>
<reference key="1">
    <citation type="journal article" date="1997" name="Eur. J. Biochem.">
        <title>Characterization, gene cloning and expression of isocitrate lyase involved in the assimilation of one-carbon compounds in Hyphomicrobium methylovorum GM2.</title>
        <authorList>
            <person name="Tanaka Y."/>
            <person name="Yoshida T."/>
            <person name="Watanabe K."/>
            <person name="Izumi Y."/>
            <person name="Mitsunaga T."/>
        </authorList>
    </citation>
    <scope>NUCLEOTIDE SEQUENCE [GENOMIC DNA]</scope>
    <scope>PROTEIN SEQUENCE OF 2-20</scope>
    <scope>FUNCTION</scope>
    <scope>CATALYTIC ACTIVITY</scope>
    <scope>COFACTOR</scope>
    <scope>ACTIVITY REGULATION</scope>
    <scope>BIOPHYSICOCHEMICAL PROPERTIES</scope>
    <scope>PATHWAY</scope>
    <scope>SUBUNIT</scope>
    <source>
        <strain>GM2</strain>
    </source>
</reference>
<feature type="initiator methionine" description="Removed" evidence="3">
    <location>
        <position position="1"/>
    </location>
</feature>
<feature type="chain" id="PRO_0000389621" description="Isocitrate lyase" evidence="3">
    <location>
        <begin position="2"/>
        <end position="540"/>
    </location>
</feature>
<feature type="active site" description="Proton acceptor" evidence="2">
    <location>
        <position position="225"/>
    </location>
</feature>
<feature type="binding site" evidence="2">
    <location>
        <begin position="103"/>
        <end position="105"/>
    </location>
    <ligand>
        <name>substrate</name>
    </ligand>
</feature>
<feature type="binding site" evidence="2">
    <location>
        <position position="187"/>
    </location>
    <ligand>
        <name>Mg(2+)</name>
        <dbReference type="ChEBI" id="CHEBI:18420"/>
    </ligand>
</feature>
<feature type="binding site" evidence="2">
    <location>
        <begin position="226"/>
        <end position="227"/>
    </location>
    <ligand>
        <name>substrate</name>
    </ligand>
</feature>
<feature type="binding site" evidence="2">
    <location>
        <begin position="385"/>
        <end position="389"/>
    </location>
    <ligand>
        <name>substrate</name>
    </ligand>
</feature>
<feature type="binding site" evidence="2">
    <location>
        <position position="458"/>
    </location>
    <ligand>
        <name>substrate</name>
    </ligand>
</feature>
<comment type="function">
    <text evidence="3">Involved in the metabolic adaptation in response to environmental changes. Catalyzes the reversible formation of succinate and glyoxylate from isocitrate, a key step of the glyoxylate cycle, which operates as an anaplerotic route for replenishing the tricarboxylic acid cycle during growth on fatty acid substrates. May be involved in the assimilation of one-carbon compounds via the isocitrate lyase-positive serine pathway.</text>
</comment>
<comment type="catalytic activity">
    <reaction evidence="3">
        <text>D-threo-isocitrate = glyoxylate + succinate</text>
        <dbReference type="Rhea" id="RHEA:13245"/>
        <dbReference type="ChEBI" id="CHEBI:15562"/>
        <dbReference type="ChEBI" id="CHEBI:30031"/>
        <dbReference type="ChEBI" id="CHEBI:36655"/>
        <dbReference type="EC" id="4.1.3.1"/>
    </reaction>
</comment>
<comment type="cofactor">
    <cofactor evidence="3">
        <name>Mg(2+)</name>
        <dbReference type="ChEBI" id="CHEBI:18420"/>
    </cofactor>
    <text evidence="3">Can also use Mn(2+).</text>
</comment>
<comment type="activity regulation">
    <text evidence="3">In the presence of magnesium, inhibited by oxalate, potassium cyanide, manganese, silver, cadmium and to a lesser extent by succinate, glycolate, iodoacetamide, DL-penicillamine, aluminum, sodium, potassium, lithium and strontium.</text>
</comment>
<comment type="biophysicochemical properties">
    <kinetics>
        <KM evidence="3">0.51 mM for D-isocitrate</KM>
    </kinetics>
    <phDependence>
        <text evidence="3">Optimum pH is 7.5. The enzyme is stable when incubated for 15 minutes at 30 degrees Celsius at pH 7.5-9.</text>
    </phDependence>
    <temperatureDependence>
        <text evidence="3">Optimum temperature is 45 degrees Celsius. Loss of activity is 0%, 16%, 30%, 82% and 100% when incubated at 25, 30, 40, 50 and 60 degrees Celsius for 30 minutes, respectively.</text>
    </temperatureDependence>
</comment>
<comment type="pathway">
    <text evidence="6">Carbohydrate metabolism; glyoxylate cycle; (S)-malate from isocitrate: step 1/2.</text>
</comment>
<comment type="pathway">
    <text evidence="6">One-carbon metabolism; formaldehyde assimilation via serine pathway.</text>
</comment>
<comment type="subunit">
    <text evidence="3">Homotetramer.</text>
</comment>
<comment type="similarity">
    <text evidence="5">Belongs to the isocitrate lyase/PEP mutase superfamily. Isocitrate lyase family.</text>
</comment>
<accession>O50078</accession>
<name>ACEA_HYPME</name>